<sequence length="94" mass="10089">MTLNNLQLFAHKKGGGSTSNGRDSQAKRLGAKAADGQTVTGGSILYRQRGTHIYPGVNVGRGGDDTLFAKVEGVVRFERKGRDKKQVSVYPIAK</sequence>
<dbReference type="EMBL" id="AE007317">
    <property type="protein sequence ID" value="AAK99818.1"/>
    <property type="status" value="ALT_INIT"/>
    <property type="molecule type" value="Genomic_DNA"/>
</dbReference>
<dbReference type="PIR" id="F97998">
    <property type="entry name" value="F97998"/>
</dbReference>
<dbReference type="RefSeq" id="NP_358608.1">
    <property type="nucleotide sequence ID" value="NC_003098.1"/>
</dbReference>
<dbReference type="SMR" id="P66136"/>
<dbReference type="STRING" id="171101.spr1014"/>
<dbReference type="KEGG" id="spr:spr1014"/>
<dbReference type="PATRIC" id="fig|171101.6.peg.1104"/>
<dbReference type="eggNOG" id="COG0211">
    <property type="taxonomic scope" value="Bacteria"/>
</dbReference>
<dbReference type="HOGENOM" id="CLU_095424_4_0_9"/>
<dbReference type="PRO" id="PR:P66136"/>
<dbReference type="Proteomes" id="UP000000586">
    <property type="component" value="Chromosome"/>
</dbReference>
<dbReference type="GO" id="GO:0022625">
    <property type="term" value="C:cytosolic large ribosomal subunit"/>
    <property type="evidence" value="ECO:0000318"/>
    <property type="project" value="GO_Central"/>
</dbReference>
<dbReference type="GO" id="GO:0003735">
    <property type="term" value="F:structural constituent of ribosome"/>
    <property type="evidence" value="ECO:0000318"/>
    <property type="project" value="GO_Central"/>
</dbReference>
<dbReference type="GO" id="GO:0006412">
    <property type="term" value="P:translation"/>
    <property type="evidence" value="ECO:0007669"/>
    <property type="project" value="UniProtKB-UniRule"/>
</dbReference>
<dbReference type="FunFam" id="2.40.50.100:FF:000004">
    <property type="entry name" value="50S ribosomal protein L27"/>
    <property type="match status" value="1"/>
</dbReference>
<dbReference type="Gene3D" id="2.40.50.100">
    <property type="match status" value="1"/>
</dbReference>
<dbReference type="HAMAP" id="MF_00539">
    <property type="entry name" value="Ribosomal_bL27"/>
    <property type="match status" value="1"/>
</dbReference>
<dbReference type="InterPro" id="IPR001684">
    <property type="entry name" value="Ribosomal_bL27"/>
</dbReference>
<dbReference type="InterPro" id="IPR018261">
    <property type="entry name" value="Ribosomal_bL27_CS"/>
</dbReference>
<dbReference type="NCBIfam" id="TIGR00062">
    <property type="entry name" value="L27"/>
    <property type="match status" value="1"/>
</dbReference>
<dbReference type="PANTHER" id="PTHR15893:SF0">
    <property type="entry name" value="LARGE RIBOSOMAL SUBUNIT PROTEIN BL27M"/>
    <property type="match status" value="1"/>
</dbReference>
<dbReference type="PANTHER" id="PTHR15893">
    <property type="entry name" value="RIBOSOMAL PROTEIN L27"/>
    <property type="match status" value="1"/>
</dbReference>
<dbReference type="Pfam" id="PF01016">
    <property type="entry name" value="Ribosomal_L27"/>
    <property type="match status" value="1"/>
</dbReference>
<dbReference type="PRINTS" id="PR00063">
    <property type="entry name" value="RIBOSOMALL27"/>
</dbReference>
<dbReference type="SUPFAM" id="SSF110324">
    <property type="entry name" value="Ribosomal L27 protein-like"/>
    <property type="match status" value="1"/>
</dbReference>
<dbReference type="PROSITE" id="PS00831">
    <property type="entry name" value="RIBOSOMAL_L27"/>
    <property type="match status" value="1"/>
</dbReference>
<name>RL27_STRR6</name>
<proteinExistence type="inferred from homology"/>
<accession>P66136</accession>
<accession>Q97QU2</accession>
<keyword id="KW-1185">Reference proteome</keyword>
<keyword id="KW-0687">Ribonucleoprotein</keyword>
<keyword id="KW-0689">Ribosomal protein</keyword>
<comment type="PTM">
    <text evidence="1">The N-terminus is cleaved by ribosomal processing cysteine protease Prp.</text>
</comment>
<comment type="similarity">
    <text evidence="2">Belongs to the bacterial ribosomal protein bL27 family.</text>
</comment>
<comment type="sequence caution" evidence="4">
    <conflict type="erroneous initiation">
        <sequence resource="EMBL-CDS" id="AAK99818"/>
    </conflict>
    <text>Truncated N-terminus.</text>
</comment>
<gene>
    <name evidence="2" type="primary">rpmA</name>
    <name type="ordered locus">spr1014</name>
</gene>
<organism>
    <name type="scientific">Streptococcus pneumoniae (strain ATCC BAA-255 / R6)</name>
    <dbReference type="NCBI Taxonomy" id="171101"/>
    <lineage>
        <taxon>Bacteria</taxon>
        <taxon>Bacillati</taxon>
        <taxon>Bacillota</taxon>
        <taxon>Bacilli</taxon>
        <taxon>Lactobacillales</taxon>
        <taxon>Streptococcaceae</taxon>
        <taxon>Streptococcus</taxon>
    </lineage>
</organism>
<evidence type="ECO:0000250" key="1">
    <source>
        <dbReference type="UniProtKB" id="Q2FXT0"/>
    </source>
</evidence>
<evidence type="ECO:0000255" key="2">
    <source>
        <dbReference type="HAMAP-Rule" id="MF_00539"/>
    </source>
</evidence>
<evidence type="ECO:0000256" key="3">
    <source>
        <dbReference type="SAM" id="MobiDB-lite"/>
    </source>
</evidence>
<evidence type="ECO:0000305" key="4"/>
<reference key="1">
    <citation type="journal article" date="2001" name="J. Bacteriol.">
        <title>Genome of the bacterium Streptococcus pneumoniae strain R6.</title>
        <authorList>
            <person name="Hoskins J."/>
            <person name="Alborn W.E. Jr."/>
            <person name="Arnold J."/>
            <person name="Blaszczak L.C."/>
            <person name="Burgett S."/>
            <person name="DeHoff B.S."/>
            <person name="Estrem S.T."/>
            <person name="Fritz L."/>
            <person name="Fu D.-J."/>
            <person name="Fuller W."/>
            <person name="Geringer C."/>
            <person name="Gilmour R."/>
            <person name="Glass J.S."/>
            <person name="Khoja H."/>
            <person name="Kraft A.R."/>
            <person name="Lagace R.E."/>
            <person name="LeBlanc D.J."/>
            <person name="Lee L.N."/>
            <person name="Lefkowitz E.J."/>
            <person name="Lu J."/>
            <person name="Matsushima P."/>
            <person name="McAhren S.M."/>
            <person name="McHenney M."/>
            <person name="McLeaster K."/>
            <person name="Mundy C.W."/>
            <person name="Nicas T.I."/>
            <person name="Norris F.H."/>
            <person name="O'Gara M."/>
            <person name="Peery R.B."/>
            <person name="Robertson G.T."/>
            <person name="Rockey P."/>
            <person name="Sun P.-M."/>
            <person name="Winkler M.E."/>
            <person name="Yang Y."/>
            <person name="Young-Bellido M."/>
            <person name="Zhao G."/>
            <person name="Zook C.A."/>
            <person name="Baltz R.H."/>
            <person name="Jaskunas S.R."/>
            <person name="Rosteck P.R. Jr."/>
            <person name="Skatrud P.L."/>
            <person name="Glass J.I."/>
        </authorList>
    </citation>
    <scope>NUCLEOTIDE SEQUENCE [LARGE SCALE GENOMIC DNA]</scope>
    <source>
        <strain>ATCC BAA-255 / R6</strain>
    </source>
</reference>
<feature type="propeptide" id="PRO_0000459954" evidence="1">
    <location>
        <begin position="1"/>
        <end position="9"/>
    </location>
</feature>
<feature type="chain" id="PRO_0000181179" description="Large ribosomal subunit protein bL27">
    <location>
        <begin position="10"/>
        <end position="94"/>
    </location>
</feature>
<feature type="region of interest" description="Disordered" evidence="3">
    <location>
        <begin position="9"/>
        <end position="33"/>
    </location>
</feature>
<protein>
    <recommendedName>
        <fullName evidence="2">Large ribosomal subunit protein bL27</fullName>
    </recommendedName>
    <alternativeName>
        <fullName evidence="4">50S ribosomal protein L27</fullName>
    </alternativeName>
</protein>